<comment type="function">
    <text>Probably involved in the processing of hormone and other protein precursors at sites comprised of pairs of basic amino acid residues.</text>
</comment>
<comment type="alternative products">
    <event type="alternative splicing"/>
    <isoform>
        <id>P29145-1</id>
        <name>Variant B</name>
        <sequence type="displayed"/>
    </isoform>
    <isoform>
        <id>P29146-1</id>
        <name>Variant A</name>
        <sequence type="external"/>
    </isoform>
</comment>
<comment type="tissue specificity">
    <text>Predominantly in the body column.</text>
</comment>
<comment type="similarity">
    <text evidence="6">Belongs to the peptidase S8 family. Furin subfamily.</text>
</comment>
<keyword id="KW-0025">Alternative splicing</keyword>
<keyword id="KW-0165">Cleavage on pair of basic residues</keyword>
<keyword id="KW-1015">Disulfide bond</keyword>
<keyword id="KW-0325">Glycoprotein</keyword>
<keyword id="KW-0378">Hydrolase</keyword>
<keyword id="KW-0645">Protease</keyword>
<keyword id="KW-1185">Reference proteome</keyword>
<keyword id="KW-0720">Serine protease</keyword>
<keyword id="KW-0732">Signal</keyword>
<keyword id="KW-0865">Zymogen</keyword>
<evidence type="ECO:0000250" key="1"/>
<evidence type="ECO:0000255" key="2"/>
<evidence type="ECO:0000255" key="3">
    <source>
        <dbReference type="PROSITE-ProRule" id="PRU01173"/>
    </source>
</evidence>
<evidence type="ECO:0000255" key="4">
    <source>
        <dbReference type="PROSITE-ProRule" id="PRU01240"/>
    </source>
</evidence>
<evidence type="ECO:0000256" key="5">
    <source>
        <dbReference type="SAM" id="MobiDB-lite"/>
    </source>
</evidence>
<evidence type="ECO:0000305" key="6"/>
<dbReference type="EC" id="3.4.21.-"/>
<dbReference type="EMBL" id="M95932">
    <property type="protein sequence ID" value="AAA29215.1"/>
    <property type="molecule type" value="mRNA"/>
</dbReference>
<dbReference type="PIR" id="B46184">
    <property type="entry name" value="B46184"/>
</dbReference>
<dbReference type="SMR" id="P29145"/>
<dbReference type="OrthoDB" id="300641at2759"/>
<dbReference type="Proteomes" id="UP000694840">
    <property type="component" value="Unplaced"/>
</dbReference>
<dbReference type="GO" id="GO:0000139">
    <property type="term" value="C:Golgi membrane"/>
    <property type="evidence" value="ECO:0007669"/>
    <property type="project" value="TreeGrafter"/>
</dbReference>
<dbReference type="GO" id="GO:0005802">
    <property type="term" value="C:trans-Golgi network"/>
    <property type="evidence" value="ECO:0007669"/>
    <property type="project" value="TreeGrafter"/>
</dbReference>
<dbReference type="GO" id="GO:0004252">
    <property type="term" value="F:serine-type endopeptidase activity"/>
    <property type="evidence" value="ECO:0007669"/>
    <property type="project" value="InterPro"/>
</dbReference>
<dbReference type="GO" id="GO:0016485">
    <property type="term" value="P:protein processing"/>
    <property type="evidence" value="ECO:0007669"/>
    <property type="project" value="TreeGrafter"/>
</dbReference>
<dbReference type="CDD" id="cd04059">
    <property type="entry name" value="Peptidases_S8_Protein_convertases_Kexins_Furin-like"/>
    <property type="match status" value="1"/>
</dbReference>
<dbReference type="FunFam" id="2.60.120.260:FF:000006">
    <property type="entry name" value="Proprotein convertase subtilisin/kexin type 5"/>
    <property type="match status" value="1"/>
</dbReference>
<dbReference type="FunFam" id="3.30.70.850:FF:000001">
    <property type="entry name" value="Proprotein convertase subtilisin/kexin type 5"/>
    <property type="match status" value="1"/>
</dbReference>
<dbReference type="FunFam" id="3.40.50.200:FF:000021">
    <property type="entry name" value="Proprotein convertase subtilisin/kexin type 5a"/>
    <property type="match status" value="1"/>
</dbReference>
<dbReference type="Gene3D" id="2.60.120.260">
    <property type="entry name" value="Galactose-binding domain-like"/>
    <property type="match status" value="1"/>
</dbReference>
<dbReference type="Gene3D" id="3.30.70.850">
    <property type="entry name" value="Peptidase S8, pro-domain"/>
    <property type="match status" value="1"/>
</dbReference>
<dbReference type="Gene3D" id="3.40.50.200">
    <property type="entry name" value="Peptidase S8/S53 domain"/>
    <property type="match status" value="1"/>
</dbReference>
<dbReference type="InterPro" id="IPR008979">
    <property type="entry name" value="Galactose-bd-like_sf"/>
</dbReference>
<dbReference type="InterPro" id="IPR034182">
    <property type="entry name" value="Kexin/furin"/>
</dbReference>
<dbReference type="InterPro" id="IPR002884">
    <property type="entry name" value="P_dom"/>
</dbReference>
<dbReference type="InterPro" id="IPR000209">
    <property type="entry name" value="Peptidase_S8/S53_dom"/>
</dbReference>
<dbReference type="InterPro" id="IPR036852">
    <property type="entry name" value="Peptidase_S8/S53_dom_sf"/>
</dbReference>
<dbReference type="InterPro" id="IPR023827">
    <property type="entry name" value="Peptidase_S8_Asp-AS"/>
</dbReference>
<dbReference type="InterPro" id="IPR022398">
    <property type="entry name" value="Peptidase_S8_His-AS"/>
</dbReference>
<dbReference type="InterPro" id="IPR023828">
    <property type="entry name" value="Peptidase_S8_Ser-AS"/>
</dbReference>
<dbReference type="InterPro" id="IPR015500">
    <property type="entry name" value="Peptidase_S8_subtilisin-rel"/>
</dbReference>
<dbReference type="InterPro" id="IPR032815">
    <property type="entry name" value="S8_pro-domain"/>
</dbReference>
<dbReference type="InterPro" id="IPR038466">
    <property type="entry name" value="S8_pro-domain_sf"/>
</dbReference>
<dbReference type="PANTHER" id="PTHR42884:SF23">
    <property type="entry name" value="FURIN-LIKE PROTEASE 2"/>
    <property type="match status" value="1"/>
</dbReference>
<dbReference type="PANTHER" id="PTHR42884">
    <property type="entry name" value="PROPROTEIN CONVERTASE SUBTILISIN/KEXIN-RELATED"/>
    <property type="match status" value="1"/>
</dbReference>
<dbReference type="Pfam" id="PF01483">
    <property type="entry name" value="P_proprotein"/>
    <property type="match status" value="1"/>
</dbReference>
<dbReference type="Pfam" id="PF00082">
    <property type="entry name" value="Peptidase_S8"/>
    <property type="match status" value="1"/>
</dbReference>
<dbReference type="Pfam" id="PF16470">
    <property type="entry name" value="S8_pro-domain"/>
    <property type="match status" value="1"/>
</dbReference>
<dbReference type="PRINTS" id="PR00723">
    <property type="entry name" value="SUBTILISIN"/>
</dbReference>
<dbReference type="SUPFAM" id="SSF49785">
    <property type="entry name" value="Galactose-binding domain-like"/>
    <property type="match status" value="1"/>
</dbReference>
<dbReference type="SUPFAM" id="SSF54897">
    <property type="entry name" value="Protease propeptides/inhibitors"/>
    <property type="match status" value="1"/>
</dbReference>
<dbReference type="SUPFAM" id="SSF52743">
    <property type="entry name" value="Subtilisin-like"/>
    <property type="match status" value="1"/>
</dbReference>
<dbReference type="PROSITE" id="PS51829">
    <property type="entry name" value="P_HOMO_B"/>
    <property type="match status" value="1"/>
</dbReference>
<dbReference type="PROSITE" id="PS51892">
    <property type="entry name" value="SUBTILASE"/>
    <property type="match status" value="1"/>
</dbReference>
<dbReference type="PROSITE" id="PS00136">
    <property type="entry name" value="SUBTILASE_ASP"/>
    <property type="match status" value="1"/>
</dbReference>
<dbReference type="PROSITE" id="PS00137">
    <property type="entry name" value="SUBTILASE_HIS"/>
    <property type="match status" value="1"/>
</dbReference>
<dbReference type="PROSITE" id="PS00138">
    <property type="entry name" value="SUBTILASE_SER"/>
    <property type="match status" value="1"/>
</dbReference>
<protein>
    <recommendedName>
        <fullName>PC3-like endoprotease variant B</fullName>
        <ecNumber>3.4.21.-</ecNumber>
    </recommendedName>
    <alternativeName>
        <fullName>SPC3</fullName>
    </alternativeName>
</protein>
<proteinExistence type="evidence at transcript level"/>
<organism>
    <name type="scientific">Hydra vulgaris</name>
    <name type="common">Hydra</name>
    <name type="synonym">Hydra attenuata</name>
    <dbReference type="NCBI Taxonomy" id="6087"/>
    <lineage>
        <taxon>Eukaryota</taxon>
        <taxon>Metazoa</taxon>
        <taxon>Cnidaria</taxon>
        <taxon>Hydrozoa</taxon>
        <taxon>Hydroidolina</taxon>
        <taxon>Anthoathecata</taxon>
        <taxon>Aplanulata</taxon>
        <taxon>Hydridae</taxon>
        <taxon>Hydra</taxon>
    </lineage>
</organism>
<reference key="1">
    <citation type="journal article" date="1992" name="Proc. Natl. Acad. Sci. U.S.A.">
        <title>Conservation of the prohormone convertase gene family in metazoa: analysis of cDNAs encoding a PC3-like protein from hydra.</title>
        <authorList>
            <person name="Chan S.J."/>
            <person name="Oliva A.A. Jr."/>
            <person name="Lamendola J."/>
            <person name="Grens A."/>
            <person name="Bode H."/>
            <person name="Steiner D.F."/>
        </authorList>
    </citation>
    <scope>NUCLEOTIDE SEQUENCE [MRNA]</scope>
</reference>
<sequence>MNYRGIYRRRYVFVLLLLVAVVNISYGWTVLKNKDYKRRYLSPSGVEKVRKHLSRKYVASRNNTQTFKKHYFSNTWAVHIDPPDNDVADRIAKKHGFTNIGKIGNIEGHYHFKHEEIGERELEKARHKTALLNLEDEVKFAEQQKILERVKRDGIPNDPYFKDMWYLLNTGQASGPAGVDMNVVPVWKKNITGRGIVISVLDDGLDWTHPDLEANYDQTASIVLNDNDNDPMPRDSDADNCHGTRCAGEAAAIANNGICGTGVAYNAKIGGVRMLDGQATDALEASALGFRGDHIDIYINCWGPKDDGKTFGKPGPMAAKALRLGAEQGRNRLGSIFVWATGNGGLTDDDCNCDGYTTSIFTISIGCIGDHGLSAYYTEKCSSTLAVTFNGASHKEGRENKMVTTDLYHQCTEEFKGTSASAPLAAGIIALTLEANPLLTWRDVQALIVHTAQITSPVDEGWKRNGAGFHFNHKFGFGRLDANAMVNAAQSWKNLPAQRKCTAASGFDHQDIPRGDSLFINIPTVACESSSAQIAKVEHVVLTVSFVHRRRGDVSIDLISPKDTKSQMLSPRKYDDSDEGLDEWSFMTVYNWGENPKGIWRLKITDNPNQDDVMNLFNGDNTDDVESLEERVIDTQTKQNKAEWEKMRKENPYFDVPYPNGVRKNKVTIEGSTQDHVKPKEGAKEPWGNYRNTNNINNNSSTAFKRKKKQ</sequence>
<accession>P29145</accession>
<name>NECB_HYDVU</name>
<feature type="signal peptide" evidence="2">
    <location>
        <begin position="1"/>
        <end position="29"/>
    </location>
</feature>
<feature type="propeptide" id="PRO_0000027075" evidence="2">
    <location>
        <begin position="30"/>
        <end position="152"/>
    </location>
</feature>
<feature type="chain" id="PRO_0000027076" description="PC3-like endoprotease variant B">
    <location>
        <begin position="153"/>
        <end position="710"/>
    </location>
</feature>
<feature type="domain" description="Peptidase S8" evidence="4">
    <location>
        <begin position="164"/>
        <end position="486"/>
    </location>
</feature>
<feature type="domain" description="P/Homo B" evidence="3">
    <location>
        <begin position="495"/>
        <end position="638"/>
    </location>
</feature>
<feature type="region of interest" description="Disordered" evidence="5">
    <location>
        <begin position="668"/>
        <end position="710"/>
    </location>
</feature>
<feature type="compositionally biased region" description="Basic and acidic residues" evidence="5">
    <location>
        <begin position="673"/>
        <end position="684"/>
    </location>
</feature>
<feature type="compositionally biased region" description="Low complexity" evidence="5">
    <location>
        <begin position="689"/>
        <end position="699"/>
    </location>
</feature>
<feature type="active site" description="Charge relay system" evidence="4">
    <location>
        <position position="202"/>
    </location>
</feature>
<feature type="active site" description="Charge relay system" evidence="4">
    <location>
        <position position="242"/>
    </location>
</feature>
<feature type="active site" description="Charge relay system" evidence="4">
    <location>
        <position position="419"/>
    </location>
</feature>
<feature type="glycosylation site" description="N-linked (GlcNAc...) asparagine" evidence="2">
    <location>
        <position position="23"/>
    </location>
</feature>
<feature type="glycosylation site" description="N-linked (GlcNAc...) asparagine" evidence="2">
    <location>
        <position position="62"/>
    </location>
</feature>
<feature type="glycosylation site" description="N-linked (GlcNAc...) asparagine" evidence="2">
    <location>
        <position position="190"/>
    </location>
</feature>
<feature type="glycosylation site" description="N-linked (GlcNAc...) asparagine" evidence="2">
    <location>
        <position position="698"/>
    </location>
</feature>
<feature type="glycosylation site" description="N-linked (GlcNAc...) asparagine" evidence="2">
    <location>
        <position position="699"/>
    </location>
</feature>
<feature type="disulfide bond" evidence="1">
    <location>
        <begin position="259"/>
        <end position="411"/>
    </location>
</feature>
<feature type="disulfide bond" evidence="1">
    <location>
        <begin position="351"/>
        <end position="381"/>
    </location>
</feature>
<feature type="disulfide bond" evidence="1">
    <location>
        <begin position="501"/>
        <end position="527"/>
    </location>
</feature>